<accession>Q9UT84</accession>
<name>YIP6_SCHPO</name>
<proteinExistence type="inferred from homology"/>
<protein>
    <recommendedName>
        <fullName>Phospholipid scramblase family protein C343.06c</fullName>
    </recommendedName>
</protein>
<dbReference type="EMBL" id="CU329670">
    <property type="protein sequence ID" value="CAB52269.1"/>
    <property type="molecule type" value="Genomic_DNA"/>
</dbReference>
<dbReference type="PIR" id="T38655">
    <property type="entry name" value="T38655"/>
</dbReference>
<dbReference type="BioGRID" id="279583">
    <property type="interactions" value="9"/>
</dbReference>
<dbReference type="FunCoup" id="Q9UT84">
    <property type="interactions" value="184"/>
</dbReference>
<dbReference type="STRING" id="284812.Q9UT84"/>
<dbReference type="PaxDb" id="4896-SPAC343.06c.1"/>
<dbReference type="EnsemblFungi" id="SPAC343.06c.1">
    <property type="protein sequence ID" value="SPAC343.06c.1:pep"/>
    <property type="gene ID" value="SPAC343.06c"/>
</dbReference>
<dbReference type="KEGG" id="spo:2543151"/>
<dbReference type="PomBase" id="SPAC343.06c"/>
<dbReference type="VEuPathDB" id="FungiDB:SPAC343.06c"/>
<dbReference type="eggNOG" id="KOG0621">
    <property type="taxonomic scope" value="Eukaryota"/>
</dbReference>
<dbReference type="HOGENOM" id="CLU_023808_0_2_1"/>
<dbReference type="InParanoid" id="Q9UT84"/>
<dbReference type="OMA" id="RQLFHTH"/>
<dbReference type="PhylomeDB" id="Q9UT84"/>
<dbReference type="PRO" id="PR:Q9UT84"/>
<dbReference type="Proteomes" id="UP000002485">
    <property type="component" value="Chromosome I"/>
</dbReference>
<dbReference type="GO" id="GO:0005739">
    <property type="term" value="C:mitochondrion"/>
    <property type="evidence" value="ECO:0007005"/>
    <property type="project" value="PomBase"/>
</dbReference>
<dbReference type="GO" id="GO:0005886">
    <property type="term" value="C:plasma membrane"/>
    <property type="evidence" value="ECO:0000318"/>
    <property type="project" value="GO_Central"/>
</dbReference>
<dbReference type="GO" id="GO:0017128">
    <property type="term" value="F:phospholipid scramblase activity"/>
    <property type="evidence" value="ECO:0000318"/>
    <property type="project" value="GO_Central"/>
</dbReference>
<dbReference type="GO" id="GO:0007006">
    <property type="term" value="P:mitochondrial membrane organization"/>
    <property type="evidence" value="ECO:0000303"/>
    <property type="project" value="PomBase"/>
</dbReference>
<dbReference type="GO" id="GO:0017121">
    <property type="term" value="P:plasma membrane phospholipid scrambling"/>
    <property type="evidence" value="ECO:0000318"/>
    <property type="project" value="GO_Central"/>
</dbReference>
<dbReference type="InterPro" id="IPR005552">
    <property type="entry name" value="Scramblase"/>
</dbReference>
<dbReference type="InterPro" id="IPR025659">
    <property type="entry name" value="Tubby-like_C"/>
</dbReference>
<dbReference type="PANTHER" id="PTHR23248:SF9">
    <property type="entry name" value="PHOSPHOLIPID SCRAMBLASE"/>
    <property type="match status" value="1"/>
</dbReference>
<dbReference type="PANTHER" id="PTHR23248">
    <property type="entry name" value="PHOSPHOLIPID SCRAMBLASE-RELATED"/>
    <property type="match status" value="1"/>
</dbReference>
<dbReference type="Pfam" id="PF03803">
    <property type="entry name" value="Scramblase"/>
    <property type="match status" value="1"/>
</dbReference>
<dbReference type="SUPFAM" id="SSF54518">
    <property type="entry name" value="Tubby C-terminal domain-like"/>
    <property type="match status" value="1"/>
</dbReference>
<comment type="subcellular location">
    <subcellularLocation>
        <location evidence="3">Mitochondrion</location>
    </subcellularLocation>
</comment>
<comment type="similarity">
    <text evidence="1">Belongs to the phospholipid scramblase family.</text>
</comment>
<gene>
    <name type="ORF">SPAC343.06c</name>
</gene>
<feature type="chain" id="PRO_0000317215" description="Phospholipid scramblase family protein C343.06c">
    <location>
        <begin position="1"/>
        <end position="381"/>
    </location>
</feature>
<feature type="region of interest" description="Disordered" evidence="2">
    <location>
        <begin position="336"/>
        <end position="369"/>
    </location>
</feature>
<feature type="compositionally biased region" description="Polar residues" evidence="2">
    <location>
        <begin position="344"/>
        <end position="359"/>
    </location>
</feature>
<keyword id="KW-0496">Mitochondrion</keyword>
<keyword id="KW-1185">Reference proteome</keyword>
<organism>
    <name type="scientific">Schizosaccharomyces pombe (strain 972 / ATCC 24843)</name>
    <name type="common">Fission yeast</name>
    <dbReference type="NCBI Taxonomy" id="284812"/>
    <lineage>
        <taxon>Eukaryota</taxon>
        <taxon>Fungi</taxon>
        <taxon>Dikarya</taxon>
        <taxon>Ascomycota</taxon>
        <taxon>Taphrinomycotina</taxon>
        <taxon>Schizosaccharomycetes</taxon>
        <taxon>Schizosaccharomycetales</taxon>
        <taxon>Schizosaccharomycetaceae</taxon>
        <taxon>Schizosaccharomyces</taxon>
    </lineage>
</organism>
<evidence type="ECO:0000255" key="1"/>
<evidence type="ECO:0000256" key="2">
    <source>
        <dbReference type="SAM" id="MobiDB-lite"/>
    </source>
</evidence>
<evidence type="ECO:0000269" key="3">
    <source>
    </source>
</evidence>
<evidence type="ECO:0000305" key="4"/>
<evidence type="ECO:0000312" key="5">
    <source>
        <dbReference type="EMBL" id="CAB52269.1"/>
    </source>
</evidence>
<reference evidence="5" key="1">
    <citation type="journal article" date="2002" name="Nature">
        <title>The genome sequence of Schizosaccharomyces pombe.</title>
        <authorList>
            <person name="Wood V."/>
            <person name="Gwilliam R."/>
            <person name="Rajandream M.A."/>
            <person name="Lyne M.H."/>
            <person name="Lyne R."/>
            <person name="Stewart A."/>
            <person name="Sgouros J.G."/>
            <person name="Peat N."/>
            <person name="Hayles J."/>
            <person name="Baker S.G."/>
            <person name="Basham D."/>
            <person name="Bowman S."/>
            <person name="Brooks K."/>
            <person name="Brown D."/>
            <person name="Brown S."/>
            <person name="Chillingworth T."/>
            <person name="Churcher C.M."/>
            <person name="Collins M."/>
            <person name="Connor R."/>
            <person name="Cronin A."/>
            <person name="Davis P."/>
            <person name="Feltwell T."/>
            <person name="Fraser A."/>
            <person name="Gentles S."/>
            <person name="Goble A."/>
            <person name="Hamlin N."/>
            <person name="Harris D.E."/>
            <person name="Hidalgo J."/>
            <person name="Hodgson G."/>
            <person name="Holroyd S."/>
            <person name="Hornsby T."/>
            <person name="Howarth S."/>
            <person name="Huckle E.J."/>
            <person name="Hunt S."/>
            <person name="Jagels K."/>
            <person name="James K.D."/>
            <person name="Jones L."/>
            <person name="Jones M."/>
            <person name="Leather S."/>
            <person name="McDonald S."/>
            <person name="McLean J."/>
            <person name="Mooney P."/>
            <person name="Moule S."/>
            <person name="Mungall K.L."/>
            <person name="Murphy L.D."/>
            <person name="Niblett D."/>
            <person name="Odell C."/>
            <person name="Oliver K."/>
            <person name="O'Neil S."/>
            <person name="Pearson D."/>
            <person name="Quail M.A."/>
            <person name="Rabbinowitsch E."/>
            <person name="Rutherford K.M."/>
            <person name="Rutter S."/>
            <person name="Saunders D."/>
            <person name="Seeger K."/>
            <person name="Sharp S."/>
            <person name="Skelton J."/>
            <person name="Simmonds M.N."/>
            <person name="Squares R."/>
            <person name="Squares S."/>
            <person name="Stevens K."/>
            <person name="Taylor K."/>
            <person name="Taylor R.G."/>
            <person name="Tivey A."/>
            <person name="Walsh S.V."/>
            <person name="Warren T."/>
            <person name="Whitehead S."/>
            <person name="Woodward J.R."/>
            <person name="Volckaert G."/>
            <person name="Aert R."/>
            <person name="Robben J."/>
            <person name="Grymonprez B."/>
            <person name="Weltjens I."/>
            <person name="Vanstreels E."/>
            <person name="Rieger M."/>
            <person name="Schaefer M."/>
            <person name="Mueller-Auer S."/>
            <person name="Gabel C."/>
            <person name="Fuchs M."/>
            <person name="Duesterhoeft A."/>
            <person name="Fritzc C."/>
            <person name="Holzer E."/>
            <person name="Moestl D."/>
            <person name="Hilbert H."/>
            <person name="Borzym K."/>
            <person name="Langer I."/>
            <person name="Beck A."/>
            <person name="Lehrach H."/>
            <person name="Reinhardt R."/>
            <person name="Pohl T.M."/>
            <person name="Eger P."/>
            <person name="Zimmermann W."/>
            <person name="Wedler H."/>
            <person name="Wambutt R."/>
            <person name="Purnelle B."/>
            <person name="Goffeau A."/>
            <person name="Cadieu E."/>
            <person name="Dreano S."/>
            <person name="Gloux S."/>
            <person name="Lelaure V."/>
            <person name="Mottier S."/>
            <person name="Galibert F."/>
            <person name="Aves S.J."/>
            <person name="Xiang Z."/>
            <person name="Hunt C."/>
            <person name="Moore K."/>
            <person name="Hurst S.M."/>
            <person name="Lucas M."/>
            <person name="Rochet M."/>
            <person name="Gaillardin C."/>
            <person name="Tallada V.A."/>
            <person name="Garzon A."/>
            <person name="Thode G."/>
            <person name="Daga R.R."/>
            <person name="Cruzado L."/>
            <person name="Jimenez J."/>
            <person name="Sanchez M."/>
            <person name="del Rey F."/>
            <person name="Benito J."/>
            <person name="Dominguez A."/>
            <person name="Revuelta J.L."/>
            <person name="Moreno S."/>
            <person name="Armstrong J."/>
            <person name="Forsburg S.L."/>
            <person name="Cerutti L."/>
            <person name="Lowe T."/>
            <person name="McCombie W.R."/>
            <person name="Paulsen I."/>
            <person name="Potashkin J."/>
            <person name="Shpakovski G.V."/>
            <person name="Ussery D."/>
            <person name="Barrell B.G."/>
            <person name="Nurse P."/>
        </authorList>
    </citation>
    <scope>NUCLEOTIDE SEQUENCE [LARGE SCALE GENOMIC DNA]</scope>
    <source>
        <strain>972 / ATCC 24843</strain>
    </source>
</reference>
<reference evidence="4" key="2">
    <citation type="journal article" date="2006" name="Nat. Biotechnol.">
        <title>ORFeome cloning and global analysis of protein localization in the fission yeast Schizosaccharomyces pombe.</title>
        <authorList>
            <person name="Matsuyama A."/>
            <person name="Arai R."/>
            <person name="Yashiroda Y."/>
            <person name="Shirai A."/>
            <person name="Kamata A."/>
            <person name="Sekido S."/>
            <person name="Kobayashi Y."/>
            <person name="Hashimoto A."/>
            <person name="Hamamoto M."/>
            <person name="Hiraoka Y."/>
            <person name="Horinouchi S."/>
            <person name="Yoshida M."/>
        </authorList>
    </citation>
    <scope>SUBCELLULAR LOCATION [LARGE SCALE ANALYSIS]</scope>
</reference>
<sequence length="381" mass="43148">MLEILWANITPIQTFVSSNHLTMLYGLKRFGCRLYHHSKSTRYIDATAKVVSQEPAAISSTGAIPLNSPAAPLLSQDVLIVERQLEMMNVFLGYEQANRYVILNQQGQHLGYIAEQGASSILSSLSRQFFHTHRAFKADVMDSNGQLVLQLNRPFSWINSRLQIHSIDYSKFSSTLVGEVLQKWHLWRRRYELFLAKRSMFEQFAKIDERVLSWEFLLRNEQDRILGSVSRNFMGLPREFFTDTGNYVLRFTSTSAANGSVNENQLLQAAHGIANDVCARDMSLEERAVMLGSAVTIDFDYFSRIHGGPALGLNIPFMFGGSSSNHDYPAEDLSAQEILKNDQETTPSTNDSSSETKSPFLSDADLDQQDFWDIFDRDGDD</sequence>